<proteinExistence type="inferred from homology"/>
<reference key="1">
    <citation type="journal article" date="1986" name="J. Biol. Chem.">
        <title>Rubella virus cDNA. Sequence and expression of E1 envelope protein.</title>
        <authorList>
            <person name="Nakhasi H.L."/>
            <person name="Meyer B.C."/>
            <person name="Liu T.Y."/>
        </authorList>
    </citation>
    <scope>NUCLEOTIDE SEQUENCE [GENOMIC RNA] OF 470-994</scope>
</reference>
<reference key="2">
    <citation type="journal article" date="2001" name="Vaccine">
        <title>Mutation of rubella virus vaccine TO-336 strain occurred in the attenuation process of wild progenitor virus.</title>
        <authorList>
            <person name="Kakizawa J."/>
            <person name="Nitta Y."/>
            <person name="Yamashita T."/>
            <person name="Ushijima H."/>
            <person name="Katow S."/>
        </authorList>
    </citation>
    <scope>NUCLEOTIDE SEQUENCE [GENOMIC RNA]</scope>
</reference>
<reference key="3">
    <citation type="journal article" date="2005" name="Wkly. Epidemiol. Rec.">
        <title>Standardization of the nomenclature for genetic characteristics of wild-type rubella viruses.</title>
        <authorList>
            <person name="Icenogle J.P."/>
            <person name="Abernathy E.S."/>
        </authorList>
    </citation>
    <scope>NUCLEOTIDE SEQUENCE [GENOMIC RNA]</scope>
    <source>
        <strain>Isolate RVI/Anhui.CHN/00</strain>
        <strain>Isolate RVI/CAL.USA/91</strain>
        <strain>Isolate RVI/CAL.USA/97</strain>
        <strain>Isolate RVI/ISR/75</strain>
        <strain>Isolate RVI/ISR/79</strain>
        <strain>Isolate RVI/ISR/88</strain>
        <strain>Isolate RVI/MYS/01</strain>
        <strain>Isolate RVI/PAN/99</strain>
        <strain>Isolate RVI/SAITAMA.JPN/94</strain>
        <strain>Isolate RVI/SHANDONG.CHN/00</strain>
        <strain>Isolate RVI/SHANDONG.CHN/02</strain>
        <strain>Isolate RVI/SLV/02</strain>
        <strain>Isolate RVI/TOKOYO.JPN/90</strain>
    </source>
</reference>
<keyword id="KW-0106">Calcium</keyword>
<keyword id="KW-0167">Capsid protein</keyword>
<keyword id="KW-1165">Clathrin-mediated endocytosis of virus by host</keyword>
<keyword id="KW-1015">Disulfide bond</keyword>
<keyword id="KW-1170">Fusion of virus membrane with host endosomal membrane</keyword>
<keyword id="KW-1168">Fusion of virus membrane with host membrane</keyword>
<keyword id="KW-0325">Glycoprotein</keyword>
<keyword id="KW-1035">Host cytoplasm</keyword>
<keyword id="KW-1040">Host Golgi apparatus</keyword>
<keyword id="KW-1043">Host membrane</keyword>
<keyword id="KW-1045">Host mitochondrion</keyword>
<keyword id="KW-0945">Host-virus interaction</keyword>
<keyword id="KW-0449">Lipoprotein</keyword>
<keyword id="KW-0472">Membrane</keyword>
<keyword id="KW-0479">Metal-binding</keyword>
<keyword id="KW-0564">Palmitate</keyword>
<keyword id="KW-0597">Phosphoprotein</keyword>
<keyword id="KW-0694">RNA-binding</keyword>
<keyword id="KW-1144">T=4 icosahedral capsid protein</keyword>
<keyword id="KW-0812">Transmembrane</keyword>
<keyword id="KW-1133">Transmembrane helix</keyword>
<keyword id="KW-1161">Viral attachment to host cell</keyword>
<keyword id="KW-0261">Viral envelope protein</keyword>
<keyword id="KW-1162">Viral penetration into host cytoplasm</keyword>
<keyword id="KW-0946">Virion</keyword>
<keyword id="KW-1164">Virus endocytosis by host</keyword>
<keyword id="KW-1160">Virus entry into host cell</keyword>
<protein>
    <recommendedName>
        <fullName>Structural polyprotein</fullName>
    </recommendedName>
    <alternativeName>
        <fullName>p110</fullName>
    </alternativeName>
    <component>
        <recommendedName>
            <fullName>Capsid protein</fullName>
        </recommendedName>
        <alternativeName>
            <fullName>Coat protein</fullName>
            <shortName>C</shortName>
        </alternativeName>
    </component>
    <component>
        <recommendedName>
            <fullName>Spike glycoprotein E2</fullName>
        </recommendedName>
        <alternativeName>
            <fullName>E2 envelope glycoprotein</fullName>
        </alternativeName>
    </component>
    <component>
        <recommendedName>
            <fullName>Spike glycoprotein E1</fullName>
        </recommendedName>
        <alternativeName>
            <fullName>E1 envelope glycoprotein</fullName>
        </alternativeName>
    </component>
</protein>
<feature type="chain" id="PRO_0000238999" description="Capsid protein">
    <location>
        <begin position="1"/>
        <end position="300"/>
    </location>
</feature>
<feature type="chain" id="PRO_0000239000" description="Spike glycoprotein E2">
    <location>
        <begin position="301"/>
        <end position="582"/>
    </location>
</feature>
<feature type="chain" id="PRO_0000239001" description="Spike glycoprotein E1">
    <location>
        <begin position="583"/>
        <end position="1063"/>
    </location>
</feature>
<feature type="topological domain" description="Extracellular" evidence="4">
    <location>
        <begin position="301"/>
        <end position="534"/>
    </location>
</feature>
<feature type="transmembrane region" description="Helical; Note=Golgi retention signal" evidence="3">
    <location>
        <begin position="535"/>
        <end position="555"/>
    </location>
</feature>
<feature type="topological domain" description="Cytoplasmic" evidence="4">
    <location>
        <begin position="556"/>
        <end position="582"/>
    </location>
</feature>
<feature type="topological domain" description="Extracellular" evidence="4">
    <location>
        <begin position="583"/>
        <end position="1028"/>
    </location>
</feature>
<feature type="transmembrane region" description="Helical; Note=Endoplasmic reticulum retention signal" evidence="3">
    <location>
        <begin position="1029"/>
        <end position="1049"/>
    </location>
</feature>
<feature type="topological domain" description="Extracellular" evidence="4">
    <location>
        <begin position="1050"/>
        <end position="1063"/>
    </location>
</feature>
<feature type="region of interest" description="Disordered" evidence="5">
    <location>
        <begin position="1"/>
        <end position="131"/>
    </location>
</feature>
<feature type="region of interest" description="Human C1QBP/SF2P32-binding" evidence="3">
    <location>
        <begin position="30"/>
        <end position="69"/>
    </location>
</feature>
<feature type="region of interest" description="Functions as E2 signal peptide" evidence="3">
    <location>
        <begin position="279"/>
        <end position="300"/>
    </location>
</feature>
<feature type="region of interest" description="Functions as E1 signal peptide" evidence="3">
    <location>
        <begin position="563"/>
        <end position="582"/>
    </location>
</feature>
<feature type="compositionally biased region" description="Basic and acidic residues" evidence="5">
    <location>
        <begin position="70"/>
        <end position="87"/>
    </location>
</feature>
<feature type="compositionally biased region" description="Pro residues" evidence="5">
    <location>
        <begin position="93"/>
        <end position="107"/>
    </location>
</feature>
<feature type="binding site" evidence="3">
    <location>
        <position position="670"/>
    </location>
    <ligand>
        <name>Ca(2+)</name>
        <dbReference type="ChEBI" id="CHEBI:29108"/>
    </ligand>
</feature>
<feature type="binding site" evidence="3">
    <location>
        <position position="671"/>
    </location>
    <ligand>
        <name>Ca(2+)</name>
        <dbReference type="ChEBI" id="CHEBI:29108"/>
    </ligand>
</feature>
<feature type="binding site" evidence="3">
    <location>
        <position position="718"/>
    </location>
    <ligand>
        <name>Ca(2+)</name>
        <dbReference type="ChEBI" id="CHEBI:29108"/>
    </ligand>
</feature>
<feature type="binding site" evidence="3">
    <location>
        <position position="719"/>
    </location>
    <ligand>
        <name>Ca(2+)</name>
        <dbReference type="ChEBI" id="CHEBI:29108"/>
    </ligand>
</feature>
<feature type="site" description="Cleavage; by host signal peptidase" evidence="4">
    <location>
        <begin position="300"/>
        <end position="301"/>
    </location>
</feature>
<feature type="site" description="Cleavage; by host signal peptidase" evidence="4">
    <location>
        <begin position="582"/>
        <end position="583"/>
    </location>
</feature>
<feature type="modified residue" description="Phosphoserine; by host" evidence="3">
    <location>
        <position position="46"/>
    </location>
</feature>
<feature type="glycosylation site" description="N-linked (GlcNAc...) asparagine; by host" evidence="4">
    <location>
        <position position="353"/>
    </location>
</feature>
<feature type="glycosylation site" description="N-linked (GlcNAc...) asparagine; by host" evidence="4">
    <location>
        <position position="371"/>
    </location>
</feature>
<feature type="glycosylation site" description="N-linked (GlcNAc...) asparagine; by host" evidence="4">
    <location>
        <position position="410"/>
    </location>
</feature>
<feature type="glycosylation site" description="N-linked (GlcNAc...) asparagine; by host" evidence="4">
    <location>
        <position position="429"/>
    </location>
</feature>
<feature type="glycosylation site" description="N-linked (GlcNAc...) asparagine; by host" evidence="3">
    <location>
        <position position="658"/>
    </location>
</feature>
<feature type="glycosylation site" description="N-linked (GlcNAc...) asparagine; by host" evidence="3">
    <location>
        <position position="759"/>
    </location>
</feature>
<feature type="glycosylation site" description="N-linked (GlcNAc...) asparagine; by host" evidence="3">
    <location>
        <position position="791"/>
    </location>
</feature>
<feature type="glycosylation site" description="O-linked (GalNAc...) threonine; by host" evidence="3">
    <location>
        <position position="1011"/>
    </location>
</feature>
<feature type="glycosylation site" description="O-linked (GalNAc...) threonine; by host" evidence="3">
    <location>
        <position position="1012"/>
    </location>
</feature>
<feature type="disulfide bond" evidence="3">
    <location>
        <begin position="153"/>
        <end position="197"/>
    </location>
</feature>
<feature type="disulfide bond" evidence="2">
    <location>
        <begin position="590"/>
        <end position="595"/>
    </location>
</feature>
<feature type="disulfide bond" evidence="2">
    <location>
        <begin position="619"/>
        <end position="824"/>
    </location>
</feature>
<feature type="disulfide bond" evidence="2">
    <location>
        <begin position="641"/>
        <end position="653"/>
    </location>
</feature>
<feature type="disulfide bond" evidence="2">
    <location>
        <begin position="699"/>
        <end position="712"/>
    </location>
</feature>
<feature type="disulfide bond" evidence="2">
    <location>
        <begin position="758"/>
        <end position="767"/>
    </location>
</feature>
<feature type="disulfide bond" evidence="2">
    <location>
        <begin position="807"/>
        <end position="817"/>
    </location>
</feature>
<feature type="disulfide bond" evidence="2">
    <location>
        <begin position="931"/>
        <end position="934"/>
    </location>
</feature>
<feature type="disulfide bond" evidence="2">
    <location>
        <begin position="950"/>
        <end position="983"/>
    </location>
</feature>
<feature type="sequence variant" description="In strain: Isolate RVI/ISR/79.">
    <original>E</original>
    <variation>G</variation>
    <location>
        <position position="26"/>
    </location>
</feature>
<feature type="sequence variant" description="In strain: Isolate RVI/CAL.USA/91, Isolate RVI/PAN/99 and Isolate RVI/SLV/02.">
    <original>S</original>
    <variation>A</variation>
    <location>
        <position position="32"/>
    </location>
</feature>
<feature type="sequence variant" description="In strain: Isolate RVI/CAL.USA/91.">
    <original>S</original>
    <variation>P</variation>
    <location>
        <position position="34"/>
    </location>
</feature>
<feature type="sequence variant" description="In strain: Isolate RVI/CAL.USA/97, Isolate RVI/MYS/01, Isolate RVI/SAITAMA.JPN/94, Isolate RVI/SHANDONG.CHN/02 and Isolate RVI/TOKOYO.JPN/90.">
    <original>S</original>
    <variation>T</variation>
    <location>
        <position position="34"/>
    </location>
</feature>
<feature type="sequence variant" description="In strain: Isolate RVI/SAITAMA.JPN/94.">
    <original>Q</original>
    <variation>P</variation>
    <location>
        <position position="42"/>
    </location>
</feature>
<feature type="sequence variant" description="In strain: Isolate RVI/Anhui.CHN/00, Isolate RVI/CAL.USA/91, Isolate RVI/CAL.USA/97, Isolate RVI/ISR/75, Isolate RVI/ISR/79, Isolate RVI/ISR/88, Isolate RVI/MYS/01, Isolate RVI/PAN/99, Isolate RVI/SAITAMA.JPN/94, Isolate RVI/SHANDONG.CHN/00, Isolate RVI/SHANDONG.CHN/02, Isolate RVI/SLV/02 and Isolate RVI/TOKOYO.JPN/90.">
    <original>L</original>
    <variation>R</variation>
    <location>
        <position position="71"/>
    </location>
</feature>
<feature type="sequence variant" description="In strain: Isolate RVI/SHANDONG.CHN/02.">
    <original>R</original>
    <variation>Q</variation>
    <location>
        <position position="84"/>
    </location>
</feature>
<feature type="sequence variant" description="In strain: Isolate RVI/CAL.USA/91.">
    <original>S</original>
    <variation>G</variation>
    <location>
        <position position="87"/>
    </location>
</feature>
<feature type="sequence variant" description="In strain: Isolate RVI/SLV/02.">
    <original>S</original>
    <variation>P</variation>
    <location>
        <position position="89"/>
    </location>
</feature>
<feature type="sequence variant" description="In strain: Isolate RVI/SLV/02.">
    <original>P</original>
    <variation>S</variation>
    <location>
        <position position="94"/>
    </location>
</feature>
<feature type="sequence variant" description="In strain: Isolate RVI/ISR/88 and Isolate RVI/SLV/02.">
    <original>S</original>
    <variation>A</variation>
    <location>
        <position position="97"/>
    </location>
</feature>
<feature type="sequence variant" description="In strain: Isolate RVI/MYS/01 and Isolate RVI/SHANDONG.CHN/02.">
    <original>S</original>
    <variation>P</variation>
    <location>
        <position position="97"/>
    </location>
</feature>
<feature type="sequence variant" description="In strain: Isolate RVI/ISR/88.">
    <original>P</original>
    <variation>L</variation>
    <location>
        <position position="100"/>
    </location>
</feature>
<feature type="sequence variant" description="In strain: Isolate RVI/CAL.USA/91, Isolate RVI/PAN/99 and Isolate RVI/SLV/02.">
    <original>P</original>
    <variation>T</variation>
    <location>
        <position position="101"/>
    </location>
</feature>
<feature type="sequence variant" description="In strain: Isolate RVI/MYS/01.">
    <original>A</original>
    <variation>V</variation>
    <location>
        <position position="148"/>
    </location>
</feature>
<feature type="sequence variant" description="In strain: Isolate RVI/SAITAMA.JPN/94.">
    <original>M</original>
    <variation>I</variation>
    <location>
        <position position="245"/>
    </location>
</feature>
<feature type="sequence variant" description="In strain: Isolate RVI/TOKOYO.JPN/90.">
    <original>S</original>
    <variation>A</variation>
    <location>
        <position position="269"/>
    </location>
</feature>
<feature type="sequence variant" description="In strain: Isolate RVI/PAN/99 and Isolate RVI/SLV/02.">
    <original>A</original>
    <variation>V</variation>
    <location>
        <position position="283"/>
    </location>
</feature>
<feature type="sequence variant" description="In strain: Isolate RVI/CAL.USA/97.">
    <original>D</original>
    <variation>E</variation>
    <location>
        <position position="307"/>
    </location>
</feature>
<feature type="sequence variant" description="In strain: Isolate RVI/SAITAMA.JPN/94 and Isolate RVI/TOKOYO.JPN/90.">
    <original>P</original>
    <variation>L</variation>
    <location>
        <position position="312"/>
    </location>
</feature>
<feature type="sequence variant" description="In strain: Isolate RVI/SHANDONG.CHN/00.">
    <original>P</original>
    <variation>S</variation>
    <location>
        <position position="312"/>
    </location>
</feature>
<feature type="sequence variant" description="In strain: Isolate RVI/MYS/01, Isolate RVI/SAITAMA.JPN/94, Isolate RVI/SHANDONG.CHN/02 and Isolate RVI/TOKOYO.JPN/90.">
    <original>T</original>
    <variation>A</variation>
    <location>
        <position position="313"/>
    </location>
</feature>
<feature type="sequence variant" description="In strain: Isolate RVI/Anhui.CHN/00 and Isolate RVI/SHANDONG.CHN/00.">
    <original>T</original>
    <variation>M</variation>
    <location>
        <position position="313"/>
    </location>
</feature>
<feature type="sequence variant" description="In strain: Isolate RVI/CAL.USA/97.">
    <original>T</original>
    <variation>V</variation>
    <location>
        <position position="313"/>
    </location>
</feature>
<feature type="sequence variant" description="In strain: Isolate RVI/Anhui.CHN/00, Isolate RVI/CAL.USA/91, Isolate RVI/CAL.USA/97, Isolate RVI/MYS/01, Isolate RVI/PAN/99, Isolate RVI/SAITAMA.JPN/94, Isolate RVI/SHANDONG.CHN/00, Isolate RVI/SHANDONG.CHN/02, Isolate RVI/SLV/02 and Isolate RVI/TOKOYO.JPN/90.">
    <original>L</original>
    <variation>P</variation>
    <location>
        <position position="314"/>
    </location>
</feature>
<feature type="sequence variant" description="In strain: Isolate RVI/ISR/79.">
    <original>Y</original>
    <variation>H</variation>
    <location>
        <position position="325"/>
    </location>
</feature>
<feature type="sequence variant" description="In strain: Isolate RVI/ISR/75.">
    <original>Q</original>
    <variation>L</variation>
    <location>
        <position position="377"/>
    </location>
</feature>
<feature type="sequence variant" description="In strain: Isolate RVI/ISR/79.">
    <original>PPA</original>
    <variation>SPP</variation>
    <location>
        <begin position="398"/>
        <end position="400"/>
    </location>
</feature>
<feature type="sequence variant" description="In strain: Isolate RVI/Anhui.CHN/00, Isolate RVI/CAL.USA/91, Isolate RVI/CAL.USA/97, Isolate RVI/ISR/75, Isolate RVI/ISR/79, Isolate RVI/ISR/88, Isolate RVI/MYS/01, Isolate RVI/PAN/99, Isolate RVI/SAITAMA.JPN/94, Isolate RVI/SHANDONG.CHN/00, Isolate RVI/SHANDONG.CHN/02, Isolate RVI/SLV/02 and Isolate RVI/TOKOYO.JPN/90.">
    <original>F</original>
    <variation>L</variation>
    <location>
        <position position="405"/>
    </location>
</feature>
<feature type="sequence variant" description="In strain: Isolate RVI/CAL.USA/97, Isolate RVI/MYS/01, Isolate RVI/SAITAMA.JPN/94, Isolate RVI/SHANDONG.CHN/02 and Isolate RVI/TOKOYO.JPN/90.">
    <original>S</original>
    <variation>A</variation>
    <location>
        <position position="411"/>
    </location>
</feature>
<feature type="sequence variant" description="In strain: Isolate RVI/ISR/75, Isolate RVI/ISR/79 and Isolate RVI/ISR/88.">
    <original>T</original>
    <variation>P</variation>
    <location>
        <position position="413"/>
    </location>
</feature>
<feature type="sequence variant" description="In strain: Isolate RVI/ISR/79.">
    <original>A</original>
    <variation>T</variation>
    <location>
        <position position="414"/>
    </location>
</feature>
<feature type="sequence variant" description="In strain: Isolate RVI/SLV/02.">
    <original>A</original>
    <variation>S</variation>
    <location>
        <position position="415"/>
    </location>
</feature>
<feature type="sequence variant" description="In strain: Isolate RVI/PAN/99.">
    <original>T</original>
    <variation>A</variation>
    <location>
        <position position="416"/>
    </location>
</feature>
<feature type="sequence variant" description="In strain: Isolate RVI/SHANDONG.CHN/02.">
    <original>PA</original>
    <variation>LT</variation>
    <location>
        <begin position="417"/>
        <end position="418"/>
    </location>
</feature>
<feature type="sequence variant" description="In strain: Isolate RVI/CAL.USA/97, Isolate RVI/SAITAMA.JPN/94, Isolate RVI/SHANDONG.CHN/00, Isolate RVI/SHANDONG.CHN/00 and Isolate RVI/TOKOYO.JPN/90.">
    <original>A</original>
    <variation>V</variation>
    <location>
        <position position="420"/>
    </location>
</feature>
<feature type="sequence variant" description="In strain: Isolate RVI/SAITAMA.JPN/94.">
    <original>P</original>
    <variation>R</variation>
    <location>
        <position position="421"/>
    </location>
</feature>
<feature type="sequence variant" description="In strain: Isolate RVI/MYS/01.">
    <original>A</original>
    <variation>T</variation>
    <location>
        <position position="422"/>
    </location>
</feature>
<feature type="sequence variant" description="In strain: Isolate RVI/ISR/88.">
    <original>A</original>
    <variation>T</variation>
    <location>
        <position position="426"/>
    </location>
</feature>
<feature type="sequence variant" description="In strain: Isolate RVI/ISR/75.">
    <original>D</original>
    <variation>G</variation>
    <location>
        <position position="430"/>
    </location>
</feature>
<feature type="sequence variant" description="In strain: Isolate RVI/SHANDONG.CHN/02.">
    <original>A</original>
    <variation>V</variation>
    <location>
        <position position="473"/>
    </location>
</feature>
<feature type="sequence variant" description="In strain: Isolate RVI/MYS/01.">
    <original>V</original>
    <variation>I</variation>
    <location>
        <position position="484"/>
    </location>
</feature>
<feature type="sequence variant" description="In strain: Isolate RVI/ISR/79 and Isolate RVI/ISR/88.">
    <original>R</original>
    <variation>H</variation>
    <location>
        <position position="497"/>
    </location>
</feature>
<feature type="sequence variant" description="In strain: Isolate RVI/MYS/01.">
    <original>V</original>
    <variation>A</variation>
    <location>
        <position position="511"/>
    </location>
</feature>
<feature type="sequence variant" description="In strain: Isolate RVI/SLV/02.">
    <original>A</original>
    <variation>T</variation>
    <location>
        <position position="528"/>
    </location>
</feature>
<feature type="sequence variant" description="In strain: Isolate RVI/MYS/01, Isolate RVI/SAITAMA.JPN/94 and Isolate RVI/SHANDONG.CHN/02.">
    <original>F</original>
    <variation>V</variation>
    <location>
        <position position="542"/>
    </location>
</feature>
<feature type="sequence variant" description="In strain: Isolate RVI/SAITAMA.JPN/94.">
    <original>V</original>
    <variation>I</variation>
    <location>
        <position position="549"/>
    </location>
</feature>
<feature type="sequence variant" description="In strain: Isolate RVI/SLV/02.">
    <original>F</original>
    <variation>L</variation>
    <location>
        <position position="552"/>
    </location>
</feature>
<feature type="sequence variant" description="In strain: Isolate RVI/CAL.USA/91, Isolate RVI/ISR/75, Isolate RVI/ISR/79, Isolate RVI/ISR/88, Isolate RVI/PAN/99 and Isolate RVI/SLV/02.">
    <original>N</original>
    <variation>T</variation>
    <location>
        <position position="577"/>
    </location>
</feature>
<feature type="sequence variant" description="In strain: Isolate RVI/CAL.USA/91, Isolate RVI/ISR/75, Isolate RVI/ISR/79, Isolate RVI/ISR/88 and Isolate RVI/PAN/99.">
    <original>T</original>
    <variation>A</variation>
    <location>
        <position position="599"/>
    </location>
</feature>
<feature type="sequence variant" description="In strain: Isolate RVI/SHANDONG.CHN/02.">
    <original>A</original>
    <variation>T</variation>
    <location>
        <position position="606"/>
    </location>
</feature>
<feature type="sequence variant" description="In strain: Isolate RVI/TOKOYO.JPN/90.">
    <original>E</original>
    <variation>D</variation>
    <location>
        <position position="634"/>
    </location>
</feature>
<feature type="sequence variant" description="In strain: Isolate RVI/SLV/02.">
    <original>V</original>
    <variation>I</variation>
    <location>
        <position position="639"/>
    </location>
</feature>
<feature type="sequence variant" description="In strain: Isolate RVI/MYS/01.">
    <original>S</original>
    <variation>T</variation>
    <location>
        <position position="682"/>
    </location>
</feature>
<feature type="sequence variant" description="In strain: Isolate RVI/CAL.USA/97.">
    <original>R</original>
    <variation>G</variation>
    <location>
        <position position="746"/>
    </location>
</feature>
<feature type="sequence variant" description="In strain: Isolate RVI/CAL.USA/91, Isolate RVI/CAL.USA/97, Isolate RVI/ISR/75, Isolate RVI/ISR/79, Isolate RVI/ISR/88, Isolate RVI/MYS/01, Isolate RVI/PAN/99, Isolate RVI/SAITAMA.JPN/94, Isolate RVI/SHANDONG.CHN/02, Isolate RVI/SLV/02 and Isolate RVI/TOKOYO.JPN/90.">
    <original>A</original>
    <variation>V</variation>
    <location>
        <position position="756"/>
    </location>
</feature>
<feature type="sequence variant" description="In strain: Isolate RVI/TOKOYO.JPN/90.">
    <original>S</original>
    <variation>L</variation>
    <location>
        <position position="757"/>
    </location>
</feature>
<feature type="sequence variant" description="In strain: Isolate RVI/Anhui.CHN/00 and Isolate RVI/SHANDONG.CHN/00.">
    <original>A</original>
    <variation>T</variation>
    <location>
        <position position="915"/>
    </location>
</feature>
<feature type="sequence variant" description="In strain: Isolate RVI/SAITAMA.JPN/94 and Isolate RVI/TOKOYO.JPN/90.">
    <original>A</original>
    <variation>V</variation>
    <location>
        <position position="915"/>
    </location>
</feature>
<feature type="sequence variant" description="In strain: Isolate RVI/SAITAMA.JPN/94.">
    <original>A</original>
    <variation>T</variation>
    <location>
        <position position="919"/>
    </location>
</feature>
<feature type="sequence variant" description="In strain: Isolate RVI/SHANDONG.CHN/02.">
    <original>L</original>
    <variation>F</variation>
    <location>
        <position position="920"/>
    </location>
</feature>
<feature type="sequence variant" description="In strain: Isolate RVI/ISR/75.">
    <original>E</original>
    <variation>D</variation>
    <location>
        <position position="986"/>
    </location>
</feature>
<feature type="sequence variant" description="In strain: Isolate RVI/SAITAMA.JPN/94.">
    <original>A</original>
    <variation>T</variation>
    <location>
        <position position="1036"/>
    </location>
</feature>
<feature type="sequence variant" description="In strain: Isolate RVI/CAL.USA/97, Isolate RVI/MYS/01Isolate RVI/SAITAMA.JPN/94, Isolate RVI/SHANDONG.CHN/02 and Isolate RVI/TOKOYO.JPN/90.">
    <original>A</original>
    <variation>T</variation>
    <location>
        <position position="1039"/>
    </location>
</feature>
<feature type="sequence variant" description="In strain: Isolate RVI/ISR/79.">
    <original>L</original>
    <variation>P</variation>
    <location>
        <position position="1041"/>
    </location>
</feature>
<feature type="sequence variant" description="In strain: Isolate RVI/SHANDONG.CHN/00.">
    <original>L</original>
    <variation>F</variation>
    <location>
        <position position="1042"/>
    </location>
</feature>
<organismHost>
    <name type="scientific">Homo sapiens</name>
    <name type="common">Human</name>
    <dbReference type="NCBI Taxonomy" id="9606"/>
</organismHost>
<name>POLS_RUBVV</name>
<evidence type="ECO:0000250" key="1"/>
<evidence type="ECO:0000250" key="2">
    <source>
        <dbReference type="UniProtKB" id="P07566"/>
    </source>
</evidence>
<evidence type="ECO:0000250" key="3">
    <source>
        <dbReference type="UniProtKB" id="P08563"/>
    </source>
</evidence>
<evidence type="ECO:0000255" key="4"/>
<evidence type="ECO:0000256" key="5">
    <source>
        <dbReference type="SAM" id="MobiDB-lite"/>
    </source>
</evidence>
<sequence>MASTTPITMEDLQKALEAQSRALRAELAAGASQSRRPRPPRQRDSSTSGDDSGRDSGGPRRRRGNRGRGQLRDWSRAPPPPEERQESRSQTPAPKPSRAPPQQPQPPRMQTGRGGSAPRPELGPPTNPFQAAVARGLRPPLHDPDTEAPTEACVTSWLWSEGEGAVFYRVDLHFTNLGTPPLDEDGRWDPALMYNPCGPEPPAHVVRAYNQPAGDVRGVWGKGERTYAEQDFRVGGTRWHRLLRMPVRGLDGDSAPLPPHTTERIETRSARHPWRIRFGAPQAFLAGLLLAAVAVGTARAGLQPRADMAAPPTLPQPPRAHGQHYGHHHHQLPFLGHDGHHGGTLRVGQHHRNASDVLPGHWLQGGWGCYNLSDWHQGTHVCHTKHMDFWCVEHDRPPPATPTPFTTAANSTTAATPATAPAPCHAGLNDSCGGFLSGCGPMRLRHGADTRCGRLICGLSTTAQYPPTRFGCAMRWGLPPWELVVLTARPEDGWTCRGVPAHPGTRCPELVSPMGRATCSPASALWLATANALSLDHALAAFVLLVPWVLIFMVCRRACRRRGAAAALTAVVLQGYNPPAYGEEAFTYLCTAPGCATQTPVPVRLAGVRFESKIVDGGCFAPWDLEATGACICEIPTDVSCEGLGAWVPTAPCARIWNGTQRACTFWAVNAYSSGGYAQLASYFNPGGSYYKQYHPTACEVEPAFGHSDAACWGFPTDTVMSVFALASYVQHPHKTVRVKFHTETRTVWQLSVAGASCNVTTEHPFCNTPHGQLEVQVPPDPGDLVEYIMNYTGNQQSRWGLGSPNCHGPDWASPVCQRHSPDCSRLVGATPERPRLRLVDADDPLLRTAPGPGEVWVTPVIGSQARKCGLHIRAGPYGHATVEMPEWIHAHTTSDPWHPPGPLGLKFKTVRPVALPRALAPPRNVRVTGCYQCGTPALVEGLAPGGGNCHLTVNGEDVGAFPPGKFVTAALLNTPPPYQVSCGGESDRASARVIDPAAQSFTGVVYGTHTTAVSETRQTWAEWAAAHWWQLTLGAICALLLAGLLACCAKCLYYLRGAIAPR</sequence>
<comment type="function">
    <molecule>Capsid protein</molecule>
    <text evidence="3">Capsid protein interacts with genomic RNA and assembles into icosahedric core particles 65-70 nm in diameter. The resulting nucleocapsid eventually associates with the cytoplasmic domain of E2 at the cell membrane, leading to budding and formation of mature virions from host Golgi membranes. Phosphorylation negatively regulates RNA-binding activity, possibly delaying virion assembly during the viral replication phase. Capsid protein dimerizes and becomes disulfide-linked in the virion. Modulates genomic RNA replication. Modulates subgenomic RNA synthesis by interacting with human C1QBP/SF2P32. Induces both perinuclear clustering of mitochondria and the formation of electron-dense intermitochondrial plaques, both hallmarks of rubella virus infected cells. Induces apoptosis when expressed in transfected cells.</text>
</comment>
<comment type="function">
    <molecule>Spike glycoprotein E2</molecule>
    <text evidence="3">Responsible for viral attachment to target host cell, by binding to the cell receptor. Its transport to the plasma membrane depends on interaction with E1 protein. The surface glycoproteins display an irregular helical organization and a pseudo-tetrameric inner nucleocapsid arrangement.</text>
</comment>
<comment type="function">
    <molecule>Spike glycoprotein E1</molecule>
    <text evidence="2 3">Class II viral fusion protein (By similarity). Fusion activity is inactive as long as E1 is bound to E2 in mature virion. After virus attachment to target cell and clathrin-mediated endocytosis, acidification of the endosome would induce dissociation of E1/E2 heterodimer and concomitant trimerization of the E1 subunits (By similarity). This E1 homotrimer is fusion active, and promotes release of viral nucleocapsid in cytoplasm after endosome and viral membrane fusion. The cytoplasmic tail of spike glycoprotein E1 modulates virus release. The surface glycoproteins display an irregular helical organization and a pseudo-tetrameric inner nucleocapsid arrangement (By similarity).</text>
</comment>
<comment type="subunit">
    <molecule>Capsid protein</molecule>
    <text evidence="3">Homodimer; further assembles into homooligomer. Interacts with human C1QBP. Interacts (via N-terminus) with protease/methyltransferase p150.</text>
</comment>
<comment type="subunit">
    <molecule>Spike glycoprotein E1</molecule>
    <text evidence="3">Heterodimer with spike glycoprotein E2.</text>
</comment>
<comment type="subunit">
    <molecule>Spike glycoprotein E2</molecule>
    <text evidence="3">Heterodimer with spike glycoprotein E1.</text>
</comment>
<comment type="subcellular location">
    <molecule>Capsid protein</molecule>
    <subcellularLocation>
        <location evidence="3">Virion</location>
    </subcellularLocation>
    <subcellularLocation>
        <location>Host cytoplasm</location>
    </subcellularLocation>
    <subcellularLocation>
        <location evidence="3">Host mitochondrion</location>
    </subcellularLocation>
    <text evidence="3">The capsid protein is concentrated around Golgi region (By similarity). In the virion, it is probably associated to the viral membrane (By similarity).</text>
</comment>
<comment type="subcellular location">
    <molecule>Spike glycoprotein E2</molecule>
    <subcellularLocation>
        <location evidence="3">Virion membrane</location>
        <topology evidence="3">Single-pass type I membrane protein</topology>
    </subcellularLocation>
    <subcellularLocation>
        <location evidence="3">Host Golgi apparatus membrane</location>
        <topology evidence="3">Single-pass type I membrane protein</topology>
    </subcellularLocation>
    <text evidence="3">E1 and E2 form heterodimer in the endoplasmic reticulum before they are transported to and retained in the Golgi complex, where virus assembly occurs. E1 possesses an endoplasmic reticulum retention signal, and unassembled E2 and E1 subunits are retained in the endoplasmic reticulum. Presumably, assembly of E2 and E1 would mask the signal, thereby allowing transport of the heterodimer to the Golgi complex.</text>
</comment>
<comment type="subcellular location">
    <molecule>Spike glycoprotein E1</molecule>
    <subcellularLocation>
        <location evidence="3">Virion membrane</location>
        <topology evidence="3">Single-pass type I membrane protein</topology>
    </subcellularLocation>
    <subcellularLocation>
        <location evidence="3">Host Golgi apparatus membrane</location>
        <topology evidence="3">Single-pass type I membrane protein</topology>
    </subcellularLocation>
    <text evidence="3">E1 and E2 form heterodimer in the endoplasmic reticulum before they are transported to and retained in the Golgi complex, where virus assembly occurs. E1 possesses an endoplasmic reticulum retention signal, and unassembled E2 and E1 subunits are retained in the endoplasmic reticulum. Presumably, assembly of E2 and E1 would mask the signal, thereby allowing transport of the heterodimer to the Golgi complex.</text>
</comment>
<comment type="domain">
    <text evidence="3">Structural polyprotein: Contains two internal signal peptides that are necessary for directing translocation of the glycoproteins into the lumen of the endoplasmic reticulum.</text>
</comment>
<comment type="domain">
    <molecule>Capsid protein</molecule>
    <text evidence="3">The capsid protein is probably attached to the viral membrane through the E2 signal peptide. This domain is also required for the localization of the capsid protein to the juxtanuclear region and subsequent virus assembly at the Golgi complex.</text>
</comment>
<comment type="PTM">
    <text evidence="3">Structural polyprotein: Specific enzymatic cleavages in vivo yield mature proteins. Two signal peptidase-mediated cleavages within the polyprotein produce the structural proteins capsid, E2, and E1. The E2 signal peptide remains attached to the C-terminus of the capsid protein after cleavage by the signal peptidase. Another signal peptide at E2 C-terminus directs E1 to the ER, with a similar mechanism.</text>
</comment>
<comment type="PTM">
    <molecule>Spike glycoprotein E1</molecule>
    <text evidence="3">Contains three N-linked oligosaccharides.</text>
</comment>
<comment type="PTM">
    <text evidence="1 3">Capsid is phosphorylated on Ser-46 by host. This phosphorylation negatively regulates capsid protein RNA-binding activity (By similarity). Dephosphorylated by human PP1A (By similarity).</text>
</comment>
<comment type="miscellaneous">
    <text evidence="3">Structural polyprotein: Translated from a subgenomic RNA synthesized during togaviruses replication.</text>
</comment>
<dbReference type="EMBL" id="J02620">
    <property type="protein sequence ID" value="AAA47423.1"/>
    <property type="status" value="ALT_SEQ"/>
    <property type="molecule type" value="Genomic_RNA"/>
</dbReference>
<dbReference type="EMBL" id="AB047330">
    <property type="protein sequence ID" value="BAB32474.1"/>
    <property type="molecule type" value="Genomic_RNA"/>
</dbReference>
<dbReference type="EMBL" id="AY968206">
    <property type="protein sequence ID" value="AAY34231.1"/>
    <property type="molecule type" value="Genomic_RNA"/>
</dbReference>
<dbReference type="EMBL" id="AY968207">
    <property type="protein sequence ID" value="AAY34232.1"/>
    <property type="molecule type" value="Genomic_RNA"/>
</dbReference>
<dbReference type="EMBL" id="AY968208">
    <property type="protein sequence ID" value="AAY34233.1"/>
    <property type="molecule type" value="Genomic_RNA"/>
</dbReference>
<dbReference type="EMBL" id="AY968209">
    <property type="protein sequence ID" value="AAY34234.1"/>
    <property type="molecule type" value="Genomic_RNA"/>
</dbReference>
<dbReference type="EMBL" id="AY968210">
    <property type="protein sequence ID" value="AAY34235.1"/>
    <property type="molecule type" value="Genomic_RNA"/>
</dbReference>
<dbReference type="EMBL" id="AY968211">
    <property type="protein sequence ID" value="AAY34236.1"/>
    <property type="molecule type" value="Genomic_RNA"/>
</dbReference>
<dbReference type="EMBL" id="AY968212">
    <property type="protein sequence ID" value="AAY34237.1"/>
    <property type="molecule type" value="Genomic_RNA"/>
</dbReference>
<dbReference type="EMBL" id="AY968213">
    <property type="protein sequence ID" value="AAY34238.1"/>
    <property type="molecule type" value="Genomic_RNA"/>
</dbReference>
<dbReference type="EMBL" id="AY968214">
    <property type="protein sequence ID" value="AAY34239.1"/>
    <property type="molecule type" value="Genomic_RNA"/>
</dbReference>
<dbReference type="EMBL" id="AY968215">
    <property type="protein sequence ID" value="AAY34240.1"/>
    <property type="molecule type" value="Genomic_RNA"/>
</dbReference>
<dbReference type="EMBL" id="AY968216">
    <property type="protein sequence ID" value="AAY34241.1"/>
    <property type="molecule type" value="Genomic_RNA"/>
</dbReference>
<dbReference type="EMBL" id="AY968217">
    <property type="protein sequence ID" value="AAY34242.1"/>
    <property type="molecule type" value="Genomic_RNA"/>
</dbReference>
<dbReference type="EMBL" id="AY968221">
    <property type="protein sequence ID" value="AAY34246.1"/>
    <property type="molecule type" value="Genomic_RNA"/>
</dbReference>
<dbReference type="PIR" id="A25340">
    <property type="entry name" value="GNWVR1"/>
</dbReference>
<dbReference type="SMR" id="P08564"/>
<dbReference type="IntAct" id="P08564">
    <property type="interactions" value="2"/>
</dbReference>
<dbReference type="Proteomes" id="UP000008389">
    <property type="component" value="Genome"/>
</dbReference>
<dbReference type="GO" id="GO:0044178">
    <property type="term" value="C:host cell Golgi membrane"/>
    <property type="evidence" value="ECO:0007669"/>
    <property type="project" value="UniProtKB-SubCell"/>
</dbReference>
<dbReference type="GO" id="GO:0033650">
    <property type="term" value="C:host cell mitochondrion"/>
    <property type="evidence" value="ECO:0007669"/>
    <property type="project" value="UniProtKB-SubCell"/>
</dbReference>
<dbReference type="GO" id="GO:0016020">
    <property type="term" value="C:membrane"/>
    <property type="evidence" value="ECO:0007669"/>
    <property type="project" value="UniProtKB-KW"/>
</dbReference>
<dbReference type="GO" id="GO:0039619">
    <property type="term" value="C:T=4 icosahedral viral capsid"/>
    <property type="evidence" value="ECO:0007669"/>
    <property type="project" value="UniProtKB-KW"/>
</dbReference>
<dbReference type="GO" id="GO:0019031">
    <property type="term" value="C:viral envelope"/>
    <property type="evidence" value="ECO:0007669"/>
    <property type="project" value="UniProtKB-KW"/>
</dbReference>
<dbReference type="GO" id="GO:0019013">
    <property type="term" value="C:viral nucleocapsid"/>
    <property type="evidence" value="ECO:0007669"/>
    <property type="project" value="InterPro"/>
</dbReference>
<dbReference type="GO" id="GO:0055036">
    <property type="term" value="C:virion membrane"/>
    <property type="evidence" value="ECO:0007669"/>
    <property type="project" value="UniProtKB-SubCell"/>
</dbReference>
<dbReference type="GO" id="GO:0046872">
    <property type="term" value="F:metal ion binding"/>
    <property type="evidence" value="ECO:0007669"/>
    <property type="project" value="UniProtKB-KW"/>
</dbReference>
<dbReference type="GO" id="GO:0003723">
    <property type="term" value="F:RNA binding"/>
    <property type="evidence" value="ECO:0007669"/>
    <property type="project" value="UniProtKB-KW"/>
</dbReference>
<dbReference type="GO" id="GO:0075512">
    <property type="term" value="P:clathrin-dependent endocytosis of virus by host cell"/>
    <property type="evidence" value="ECO:0007669"/>
    <property type="project" value="UniProtKB-KW"/>
</dbReference>
<dbReference type="GO" id="GO:0039654">
    <property type="term" value="P:fusion of virus membrane with host endosome membrane"/>
    <property type="evidence" value="ECO:0007669"/>
    <property type="project" value="UniProtKB-KW"/>
</dbReference>
<dbReference type="GO" id="GO:0019062">
    <property type="term" value="P:virion attachment to host cell"/>
    <property type="evidence" value="ECO:0007669"/>
    <property type="project" value="UniProtKB-KW"/>
</dbReference>
<dbReference type="Gene3D" id="2.60.98.30">
    <property type="entry name" value="Rubella membrane glycoprotein E1, domain 1"/>
    <property type="match status" value="1"/>
</dbReference>
<dbReference type="Gene3D" id="3.30.67.20">
    <property type="entry name" value="Rubella membrane glycoprotein E1, domain 2"/>
    <property type="match status" value="2"/>
</dbReference>
<dbReference type="Gene3D" id="2.60.40.2650">
    <property type="entry name" value="Rubella membrane glycoprotein E1, domain 3"/>
    <property type="match status" value="1"/>
</dbReference>
<dbReference type="Gene3D" id="3.10.50.50">
    <property type="entry name" value="Rubella virus capsid protein"/>
    <property type="match status" value="1"/>
</dbReference>
<dbReference type="InterPro" id="IPR008819">
    <property type="entry name" value="Rubella_Capsid"/>
</dbReference>
<dbReference type="InterPro" id="IPR043106">
    <property type="entry name" value="Rubella_Capsid_sf"/>
</dbReference>
<dbReference type="InterPro" id="IPR008820">
    <property type="entry name" value="Rubella_E1"/>
</dbReference>
<dbReference type="InterPro" id="IPR042500">
    <property type="entry name" value="Rubella_E1_1"/>
</dbReference>
<dbReference type="InterPro" id="IPR042498">
    <property type="entry name" value="Rubella_E1_2"/>
</dbReference>
<dbReference type="InterPro" id="IPR042499">
    <property type="entry name" value="Rubella_E1_3"/>
</dbReference>
<dbReference type="InterPro" id="IPR008821">
    <property type="entry name" value="Rubella_E2"/>
</dbReference>
<dbReference type="Pfam" id="PF05750">
    <property type="entry name" value="Rubella_Capsid"/>
    <property type="match status" value="1"/>
</dbReference>
<dbReference type="Pfam" id="PF05748">
    <property type="entry name" value="Rubella_E1"/>
    <property type="match status" value="1"/>
</dbReference>
<dbReference type="Pfam" id="PF05749">
    <property type="entry name" value="Rubella_E2"/>
    <property type="match status" value="1"/>
</dbReference>
<organism>
    <name type="scientific">Rubella virus (strain TO-336)</name>
    <name type="common">RUBV</name>
    <dbReference type="NCBI Taxonomy" id="376264"/>
    <lineage>
        <taxon>Viruses</taxon>
        <taxon>Riboviria</taxon>
        <taxon>Orthornavirae</taxon>
        <taxon>Kitrinoviricota</taxon>
        <taxon>Alsuviricetes</taxon>
        <taxon>Hepelivirales</taxon>
        <taxon>Matonaviridae</taxon>
        <taxon>Rubivirus</taxon>
        <taxon>Rubivirus rubellae</taxon>
    </lineage>
</organism>
<accession>P08564</accession>
<accession>Q4VDZ6</accession>
<accession>Q4VE00</accession>
<accession>Q4VE01</accession>
<accession>Q4VE02</accession>
<accession>Q4VE03</accession>
<accession>Q4VE04</accession>
<accession>Q4VE05</accession>
<accession>Q4VE06</accession>
<accession>Q4VE07</accession>
<accession>Q4VE08</accession>
<accession>Q4VE09</accession>
<accession>Q4VE10</accession>
<accession>Q4VE11</accession>
<accession>Q88780</accession>
<accession>Q99IE4</accession>